<evidence type="ECO:0000255" key="1">
    <source>
        <dbReference type="PROSITE-ProRule" id="PRU00056"/>
    </source>
</evidence>
<evidence type="ECO:0000255" key="2">
    <source>
        <dbReference type="PROSITE-ProRule" id="PRU00096"/>
    </source>
</evidence>
<evidence type="ECO:0000255" key="3">
    <source>
        <dbReference type="PROSITE-ProRule" id="PRU00158"/>
    </source>
</evidence>
<evidence type="ECO:0000256" key="4">
    <source>
        <dbReference type="SAM" id="MobiDB-lite"/>
    </source>
</evidence>
<protein>
    <recommendedName>
        <fullName>SEC14-like protein 5</fullName>
    </recommendedName>
</protein>
<proteinExistence type="evidence at transcript level"/>
<sequence>MVQKYQSPVRVYKYPFELVMAAYEKRFPTCPQIPVFLGSDILQEHKSEDGALHVVERSCKLNVDAPRLLKKIAGVEFVYFIQKNTVNWKDRTLLIEAHNETFSSRVLVNETCSYSVHPENEEWTCFEQTASLDIKSFFGFESTVEKIAMKQYTANIKRGKEVIEFYLNELISQGITHLPKWTPGVPAGWHPLQAFRSGITRSNQAEQTASQGPCKADAGSHSLAAEPSTPDTDKLEADYIERYLGQLTPMQESALIHLRQWLQETHKGKIPKDEHILRFLRARDFNMEKAREMLCQSLSWRKQHQVDYILQTWQPPRVLEEYYAGGWHYHDKDGRPLYILRLGQVDTKGLVKALGEEAILRHVLSINEEGQKRCEENTRQFGRPIWSWTCLVDLEGLNMRHLWRPGVKALLRIIEVVEANYPETLGRLLIVRAPRVFPVLWTLVSPFINENSRQKFLIYSGNNYQGPGGIADYVDKEIVPDFLGGECVCNIPEGGLVPKSLYQSDEDAEMSDHIRLWTETIYQSSCVWKGAPHEIIVEILEEESVITWDFDILRGDVIFSLFHSKRAPDTRQRELALAAGNAPSSNVQLIDKSWTLGVDYSRVQAPLVCREGESIQGSHVTRWPGIYILQWKMHSSASGSSMARVDDVLASLQGSSHKCKLMYYFEVLASEDFRGSMSSLESCSGFSQLSGVTNTSSKSHSSSLISR</sequence>
<name>S14L5_XENTR</name>
<accession>Q0V9N0</accession>
<reference key="1">
    <citation type="submission" date="2006-08" db="EMBL/GenBank/DDBJ databases">
        <authorList>
            <consortium name="NIH - Xenopus Gene Collection (XGC) project"/>
        </authorList>
    </citation>
    <scope>NUCLEOTIDE SEQUENCE [LARGE SCALE MRNA]</scope>
    <source>
        <tissue>Testis</tissue>
    </source>
</reference>
<keyword id="KW-1185">Reference proteome</keyword>
<dbReference type="EMBL" id="BC121463">
    <property type="protein sequence ID" value="AAI21464.1"/>
    <property type="molecule type" value="mRNA"/>
</dbReference>
<dbReference type="RefSeq" id="NP_001096225.1">
    <property type="nucleotide sequence ID" value="NM_001102755.1"/>
</dbReference>
<dbReference type="SMR" id="Q0V9N0"/>
<dbReference type="STRING" id="8364.ENSXETP00000004904"/>
<dbReference type="PaxDb" id="8364-ENSXETP00000020041"/>
<dbReference type="DNASU" id="100124776"/>
<dbReference type="GeneID" id="100124776"/>
<dbReference type="KEGG" id="xtr:100124776"/>
<dbReference type="AGR" id="Xenbase:XB-GENE-5823346"/>
<dbReference type="CTD" id="6397"/>
<dbReference type="Xenbase" id="XB-GENE-5823346">
    <property type="gene designation" value="sec14l1"/>
</dbReference>
<dbReference type="eggNOG" id="KOG1471">
    <property type="taxonomic scope" value="Eukaryota"/>
</dbReference>
<dbReference type="InParanoid" id="Q0V9N0"/>
<dbReference type="OrthoDB" id="30289at2759"/>
<dbReference type="Proteomes" id="UP000008143">
    <property type="component" value="Chromosome 9"/>
</dbReference>
<dbReference type="Bgee" id="ENSXETG00000009129">
    <property type="expression patterns" value="Expressed in testis and 7 other cell types or tissues"/>
</dbReference>
<dbReference type="CDD" id="cd00170">
    <property type="entry name" value="SEC14"/>
    <property type="match status" value="1"/>
</dbReference>
<dbReference type="FunFam" id="3.40.525.10:FF:000006">
    <property type="entry name" value="SEC14-like lipid binding 1"/>
    <property type="match status" value="1"/>
</dbReference>
<dbReference type="Gene3D" id="3.40.525.10">
    <property type="entry name" value="CRAL-TRIO lipid binding domain"/>
    <property type="match status" value="1"/>
</dbReference>
<dbReference type="Gene3D" id="2.60.120.680">
    <property type="entry name" value="GOLD domain"/>
    <property type="match status" value="1"/>
</dbReference>
<dbReference type="InterPro" id="IPR001251">
    <property type="entry name" value="CRAL-TRIO_dom"/>
</dbReference>
<dbReference type="InterPro" id="IPR036865">
    <property type="entry name" value="CRAL-TRIO_dom_sf"/>
</dbReference>
<dbReference type="InterPro" id="IPR011074">
    <property type="entry name" value="CRAL/TRIO_N_dom"/>
</dbReference>
<dbReference type="InterPro" id="IPR036273">
    <property type="entry name" value="CRAL/TRIO_N_dom_sf"/>
</dbReference>
<dbReference type="InterPro" id="IPR009038">
    <property type="entry name" value="GOLD_dom"/>
</dbReference>
<dbReference type="InterPro" id="IPR036598">
    <property type="entry name" value="GOLD_dom_sf"/>
</dbReference>
<dbReference type="InterPro" id="IPR006797">
    <property type="entry name" value="PRELI/MSF1_dom"/>
</dbReference>
<dbReference type="InterPro" id="IPR051064">
    <property type="entry name" value="SEC14/CRAL-TRIO_domain"/>
</dbReference>
<dbReference type="PANTHER" id="PTHR23324">
    <property type="entry name" value="SEC14 RELATED PROTEIN"/>
    <property type="match status" value="1"/>
</dbReference>
<dbReference type="PANTHER" id="PTHR23324:SF39">
    <property type="entry name" value="SEC14-LIKE PROTEIN 5"/>
    <property type="match status" value="1"/>
</dbReference>
<dbReference type="Pfam" id="PF00650">
    <property type="entry name" value="CRAL_TRIO"/>
    <property type="match status" value="1"/>
</dbReference>
<dbReference type="Pfam" id="PF03765">
    <property type="entry name" value="CRAL_TRIO_N"/>
    <property type="match status" value="1"/>
</dbReference>
<dbReference type="Pfam" id="PF04707">
    <property type="entry name" value="PRELI"/>
    <property type="match status" value="1"/>
</dbReference>
<dbReference type="SMART" id="SM01100">
    <property type="entry name" value="CRAL_TRIO_N"/>
    <property type="match status" value="1"/>
</dbReference>
<dbReference type="SMART" id="SM00516">
    <property type="entry name" value="SEC14"/>
    <property type="match status" value="1"/>
</dbReference>
<dbReference type="SUPFAM" id="SSF52087">
    <property type="entry name" value="CRAL/TRIO domain"/>
    <property type="match status" value="1"/>
</dbReference>
<dbReference type="SUPFAM" id="SSF46938">
    <property type="entry name" value="CRAL/TRIO N-terminal domain"/>
    <property type="match status" value="1"/>
</dbReference>
<dbReference type="SUPFAM" id="SSF101576">
    <property type="entry name" value="Supernatant protein factor (SPF), C-terminal domain"/>
    <property type="match status" value="1"/>
</dbReference>
<dbReference type="PROSITE" id="PS50191">
    <property type="entry name" value="CRAL_TRIO"/>
    <property type="match status" value="1"/>
</dbReference>
<dbReference type="PROSITE" id="PS50866">
    <property type="entry name" value="GOLD"/>
    <property type="match status" value="1"/>
</dbReference>
<dbReference type="PROSITE" id="PS50904">
    <property type="entry name" value="PRELI_MSF1"/>
    <property type="match status" value="1"/>
</dbReference>
<organism>
    <name type="scientific">Xenopus tropicalis</name>
    <name type="common">Western clawed frog</name>
    <name type="synonym">Silurana tropicalis</name>
    <dbReference type="NCBI Taxonomy" id="8364"/>
    <lineage>
        <taxon>Eukaryota</taxon>
        <taxon>Metazoa</taxon>
        <taxon>Chordata</taxon>
        <taxon>Craniata</taxon>
        <taxon>Vertebrata</taxon>
        <taxon>Euteleostomi</taxon>
        <taxon>Amphibia</taxon>
        <taxon>Batrachia</taxon>
        <taxon>Anura</taxon>
        <taxon>Pipoidea</taxon>
        <taxon>Pipidae</taxon>
        <taxon>Xenopodinae</taxon>
        <taxon>Xenopus</taxon>
        <taxon>Silurana</taxon>
    </lineage>
</organism>
<feature type="chain" id="PRO_0000333866" description="SEC14-like protein 5">
    <location>
        <begin position="1"/>
        <end position="707"/>
    </location>
</feature>
<feature type="domain" description="PRELI/MSF1" evidence="3">
    <location>
        <begin position="3"/>
        <end position="175"/>
    </location>
</feature>
<feature type="domain" description="CRAL-TRIO" evidence="1">
    <location>
        <begin position="315"/>
        <end position="491"/>
    </location>
</feature>
<feature type="domain" description="GOLD" evidence="2">
    <location>
        <begin position="518"/>
        <end position="667"/>
    </location>
</feature>
<feature type="region of interest" description="Disordered" evidence="4">
    <location>
        <begin position="201"/>
        <end position="232"/>
    </location>
</feature>
<feature type="region of interest" description="Disordered" evidence="4">
    <location>
        <begin position="686"/>
        <end position="707"/>
    </location>
</feature>
<feature type="compositionally biased region" description="Polar residues" evidence="4">
    <location>
        <begin position="201"/>
        <end position="211"/>
    </location>
</feature>
<feature type="compositionally biased region" description="Polar residues" evidence="4">
    <location>
        <begin position="686"/>
        <end position="695"/>
    </location>
</feature>
<feature type="compositionally biased region" description="Low complexity" evidence="4">
    <location>
        <begin position="696"/>
        <end position="707"/>
    </location>
</feature>
<gene>
    <name type="primary">sec14l1</name>
</gene>